<evidence type="ECO:0000250" key="1"/>
<evidence type="ECO:0000255" key="2">
    <source>
        <dbReference type="HAMAP-Rule" id="MF_01057"/>
    </source>
</evidence>
<accession>A2BUM1</accession>
<gene>
    <name evidence="2" type="primary">trmB</name>
    <name type="ordered locus">P9515_02731</name>
</gene>
<organism>
    <name type="scientific">Prochlorococcus marinus (strain MIT 9515)</name>
    <dbReference type="NCBI Taxonomy" id="167542"/>
    <lineage>
        <taxon>Bacteria</taxon>
        <taxon>Bacillati</taxon>
        <taxon>Cyanobacteriota</taxon>
        <taxon>Cyanophyceae</taxon>
        <taxon>Synechococcales</taxon>
        <taxon>Prochlorococcaceae</taxon>
        <taxon>Prochlorococcus</taxon>
    </lineage>
</organism>
<sequence>MRQHVNPLSKNFFEIDPIPPLNEVFENPQLPLHLDIGCASGDFLMELSLKNKNWNYIGIEIREKLVLNANLKIKNREYKNVYFSFGNAINILNNTNNKTLIDAITSISFYFPDPWFKKKHHKRRVIQPEFINLLSNAMRTRSLIFIKTDVQELFEYMELTILESLKFKKLAYEDFRVNESFNPIKTQTKREKYVLLSQFEIYESIYIRI</sequence>
<keyword id="KW-0489">Methyltransferase</keyword>
<keyword id="KW-0949">S-adenosyl-L-methionine</keyword>
<keyword id="KW-0808">Transferase</keyword>
<keyword id="KW-0819">tRNA processing</keyword>
<proteinExistence type="inferred from homology"/>
<dbReference type="EC" id="2.1.1.33" evidence="2"/>
<dbReference type="EMBL" id="CP000552">
    <property type="protein sequence ID" value="ABM71482.1"/>
    <property type="molecule type" value="Genomic_DNA"/>
</dbReference>
<dbReference type="RefSeq" id="WP_011819594.1">
    <property type="nucleotide sequence ID" value="NC_008817.1"/>
</dbReference>
<dbReference type="SMR" id="A2BUM1"/>
<dbReference type="STRING" id="167542.P9515_02731"/>
<dbReference type="GeneID" id="60201552"/>
<dbReference type="KEGG" id="pmc:P9515_02731"/>
<dbReference type="eggNOG" id="COG0220">
    <property type="taxonomic scope" value="Bacteria"/>
</dbReference>
<dbReference type="HOGENOM" id="CLU_050910_1_3_3"/>
<dbReference type="OrthoDB" id="9802090at2"/>
<dbReference type="UniPathway" id="UPA00989"/>
<dbReference type="Proteomes" id="UP000001589">
    <property type="component" value="Chromosome"/>
</dbReference>
<dbReference type="GO" id="GO:0043527">
    <property type="term" value="C:tRNA methyltransferase complex"/>
    <property type="evidence" value="ECO:0007669"/>
    <property type="project" value="TreeGrafter"/>
</dbReference>
<dbReference type="GO" id="GO:0008176">
    <property type="term" value="F:tRNA (guanine(46)-N7)-methyltransferase activity"/>
    <property type="evidence" value="ECO:0007669"/>
    <property type="project" value="UniProtKB-UniRule"/>
</dbReference>
<dbReference type="CDD" id="cd02440">
    <property type="entry name" value="AdoMet_MTases"/>
    <property type="match status" value="1"/>
</dbReference>
<dbReference type="Gene3D" id="3.40.50.150">
    <property type="entry name" value="Vaccinia Virus protein VP39"/>
    <property type="match status" value="1"/>
</dbReference>
<dbReference type="HAMAP" id="MF_01057">
    <property type="entry name" value="tRNA_methyltr_TrmB"/>
    <property type="match status" value="1"/>
</dbReference>
<dbReference type="InterPro" id="IPR029063">
    <property type="entry name" value="SAM-dependent_MTases_sf"/>
</dbReference>
<dbReference type="InterPro" id="IPR003358">
    <property type="entry name" value="tRNA_(Gua-N-7)_MeTrfase_Trmb"/>
</dbReference>
<dbReference type="InterPro" id="IPR055361">
    <property type="entry name" value="tRNA_methyltr_TrmB_bact"/>
</dbReference>
<dbReference type="NCBIfam" id="TIGR00091">
    <property type="entry name" value="tRNA (guanosine(46)-N7)-methyltransferase TrmB"/>
    <property type="match status" value="1"/>
</dbReference>
<dbReference type="PANTHER" id="PTHR23417">
    <property type="entry name" value="3-DEOXY-D-MANNO-OCTULOSONIC-ACID TRANSFERASE/TRNA GUANINE-N 7 - -METHYLTRANSFERASE"/>
    <property type="match status" value="1"/>
</dbReference>
<dbReference type="PANTHER" id="PTHR23417:SF21">
    <property type="entry name" value="TRNA (GUANINE-N(7)-)-METHYLTRANSFERASE"/>
    <property type="match status" value="1"/>
</dbReference>
<dbReference type="Pfam" id="PF02390">
    <property type="entry name" value="Methyltransf_4"/>
    <property type="match status" value="1"/>
</dbReference>
<dbReference type="SUPFAM" id="SSF53335">
    <property type="entry name" value="S-adenosyl-L-methionine-dependent methyltransferases"/>
    <property type="match status" value="1"/>
</dbReference>
<dbReference type="PROSITE" id="PS51625">
    <property type="entry name" value="SAM_MT_TRMB"/>
    <property type="match status" value="1"/>
</dbReference>
<reference key="1">
    <citation type="journal article" date="2007" name="PLoS Genet.">
        <title>Patterns and implications of gene gain and loss in the evolution of Prochlorococcus.</title>
        <authorList>
            <person name="Kettler G.C."/>
            <person name="Martiny A.C."/>
            <person name="Huang K."/>
            <person name="Zucker J."/>
            <person name="Coleman M.L."/>
            <person name="Rodrigue S."/>
            <person name="Chen F."/>
            <person name="Lapidus A."/>
            <person name="Ferriera S."/>
            <person name="Johnson J."/>
            <person name="Steglich C."/>
            <person name="Church G.M."/>
            <person name="Richardson P."/>
            <person name="Chisholm S.W."/>
        </authorList>
    </citation>
    <scope>NUCLEOTIDE SEQUENCE [LARGE SCALE GENOMIC DNA]</scope>
    <source>
        <strain>MIT 9515</strain>
    </source>
</reference>
<name>TRMB_PROM5</name>
<feature type="chain" id="PRO_0000288200" description="tRNA (guanine-N(7)-)-methyltransferase">
    <location>
        <begin position="1"/>
        <end position="209"/>
    </location>
</feature>
<feature type="active site" evidence="1">
    <location>
        <position position="113"/>
    </location>
</feature>
<feature type="binding site" evidence="2">
    <location>
        <position position="35"/>
    </location>
    <ligand>
        <name>S-adenosyl-L-methionine</name>
        <dbReference type="ChEBI" id="CHEBI:59789"/>
    </ligand>
</feature>
<feature type="binding site" evidence="2">
    <location>
        <position position="60"/>
    </location>
    <ligand>
        <name>S-adenosyl-L-methionine</name>
        <dbReference type="ChEBI" id="CHEBI:59789"/>
    </ligand>
</feature>
<feature type="binding site" evidence="2">
    <location>
        <position position="87"/>
    </location>
    <ligand>
        <name>S-adenosyl-L-methionine</name>
        <dbReference type="ChEBI" id="CHEBI:59789"/>
    </ligand>
</feature>
<feature type="binding site" evidence="2">
    <location>
        <position position="113"/>
    </location>
    <ligand>
        <name>S-adenosyl-L-methionine</name>
        <dbReference type="ChEBI" id="CHEBI:59789"/>
    </ligand>
</feature>
<feature type="binding site" evidence="2">
    <location>
        <position position="117"/>
    </location>
    <ligand>
        <name>substrate</name>
    </ligand>
</feature>
<feature type="binding site" evidence="2">
    <location>
        <position position="149"/>
    </location>
    <ligand>
        <name>substrate</name>
    </ligand>
</feature>
<comment type="function">
    <text evidence="2">Catalyzes the formation of N(7)-methylguanine at position 46 (m7G46) in tRNA.</text>
</comment>
<comment type="catalytic activity">
    <reaction evidence="2">
        <text>guanosine(46) in tRNA + S-adenosyl-L-methionine = N(7)-methylguanosine(46) in tRNA + S-adenosyl-L-homocysteine</text>
        <dbReference type="Rhea" id="RHEA:42708"/>
        <dbReference type="Rhea" id="RHEA-COMP:10188"/>
        <dbReference type="Rhea" id="RHEA-COMP:10189"/>
        <dbReference type="ChEBI" id="CHEBI:57856"/>
        <dbReference type="ChEBI" id="CHEBI:59789"/>
        <dbReference type="ChEBI" id="CHEBI:74269"/>
        <dbReference type="ChEBI" id="CHEBI:74480"/>
        <dbReference type="EC" id="2.1.1.33"/>
    </reaction>
</comment>
<comment type="pathway">
    <text evidence="2">tRNA modification; N(7)-methylguanine-tRNA biosynthesis.</text>
</comment>
<comment type="similarity">
    <text evidence="2">Belongs to the class I-like SAM-binding methyltransferase superfamily. TrmB family.</text>
</comment>
<protein>
    <recommendedName>
        <fullName evidence="2">tRNA (guanine-N(7)-)-methyltransferase</fullName>
        <ecNumber evidence="2">2.1.1.33</ecNumber>
    </recommendedName>
    <alternativeName>
        <fullName evidence="2">tRNA (guanine(46)-N(7))-methyltransferase</fullName>
    </alternativeName>
    <alternativeName>
        <fullName evidence="2">tRNA(m7G46)-methyltransferase</fullName>
    </alternativeName>
</protein>